<name>POLG_POL32</name>
<reference key="1">
    <citation type="journal article" date="1986" name="J. Gen. Virol.">
        <title>The nucleotide sequence of a type 3 poliovirus isolated during a recent outbreak of poliomyelitis in Finland.</title>
        <authorList>
            <person name="Hughes P.J."/>
            <person name="Evans D.M.A."/>
            <person name="Minor P.D."/>
            <person name="Schild G.C."/>
            <person name="Almond J.W."/>
            <person name="Stanway G."/>
        </authorList>
    </citation>
    <scope>NUCLEOTIDE SEQUENCE [GENOMIC RNA]</scope>
</reference>
<dbReference type="EC" id="3.4.22.29" evidence="1"/>
<dbReference type="EC" id="3.6.1.15" evidence="1"/>
<dbReference type="EC" id="3.4.22.28" evidence="11"/>
<dbReference type="EC" id="2.7.7.48" evidence="9"/>
<dbReference type="EMBL" id="X04468">
    <property type="protein sequence ID" value="CAA28155.1"/>
    <property type="molecule type" value="Genomic_RNA"/>
</dbReference>
<dbReference type="PIR" id="A27245">
    <property type="entry name" value="GNNY27"/>
</dbReference>
<dbReference type="BMRB" id="P06209"/>
<dbReference type="SMR" id="P06209"/>
<dbReference type="IntAct" id="P06209">
    <property type="interactions" value="1"/>
</dbReference>
<dbReference type="MEROPS" id="C03.001"/>
<dbReference type="MEROPS" id="C03.020"/>
<dbReference type="MEROPS" id="N08.001"/>
<dbReference type="Proteomes" id="UP000008474">
    <property type="component" value="Genome"/>
</dbReference>
<dbReference type="GO" id="GO:0044162">
    <property type="term" value="C:host cell cytoplasmic vesicle membrane"/>
    <property type="evidence" value="ECO:0007669"/>
    <property type="project" value="UniProtKB-SubCell"/>
</dbReference>
<dbReference type="GO" id="GO:0042025">
    <property type="term" value="C:host cell nucleus"/>
    <property type="evidence" value="ECO:0007669"/>
    <property type="project" value="UniProtKB-SubCell"/>
</dbReference>
<dbReference type="GO" id="GO:0016020">
    <property type="term" value="C:membrane"/>
    <property type="evidence" value="ECO:0007669"/>
    <property type="project" value="UniProtKB-KW"/>
</dbReference>
<dbReference type="GO" id="GO:0039618">
    <property type="term" value="C:T=pseudo3 icosahedral viral capsid"/>
    <property type="evidence" value="ECO:0007669"/>
    <property type="project" value="UniProtKB-KW"/>
</dbReference>
<dbReference type="GO" id="GO:0005524">
    <property type="term" value="F:ATP binding"/>
    <property type="evidence" value="ECO:0007669"/>
    <property type="project" value="UniProtKB-KW"/>
</dbReference>
<dbReference type="GO" id="GO:0015267">
    <property type="term" value="F:channel activity"/>
    <property type="evidence" value="ECO:0007669"/>
    <property type="project" value="UniProtKB-KW"/>
</dbReference>
<dbReference type="GO" id="GO:0004197">
    <property type="term" value="F:cysteine-type endopeptidase activity"/>
    <property type="evidence" value="ECO:0007669"/>
    <property type="project" value="UniProtKB-EC"/>
</dbReference>
<dbReference type="GO" id="GO:0017111">
    <property type="term" value="F:ribonucleoside triphosphate phosphatase activity"/>
    <property type="evidence" value="ECO:0007669"/>
    <property type="project" value="UniProtKB-EC"/>
</dbReference>
<dbReference type="GO" id="GO:0003723">
    <property type="term" value="F:RNA binding"/>
    <property type="evidence" value="ECO:0007669"/>
    <property type="project" value="UniProtKB-KW"/>
</dbReference>
<dbReference type="GO" id="GO:0003724">
    <property type="term" value="F:RNA helicase activity"/>
    <property type="evidence" value="ECO:0007669"/>
    <property type="project" value="InterPro"/>
</dbReference>
<dbReference type="GO" id="GO:0003968">
    <property type="term" value="F:RNA-directed RNA polymerase activity"/>
    <property type="evidence" value="ECO:0007669"/>
    <property type="project" value="UniProtKB-KW"/>
</dbReference>
<dbReference type="GO" id="GO:0005198">
    <property type="term" value="F:structural molecule activity"/>
    <property type="evidence" value="ECO:0007669"/>
    <property type="project" value="InterPro"/>
</dbReference>
<dbReference type="GO" id="GO:0008270">
    <property type="term" value="F:zinc ion binding"/>
    <property type="evidence" value="ECO:0007669"/>
    <property type="project" value="UniProtKB-KW"/>
</dbReference>
<dbReference type="GO" id="GO:0006260">
    <property type="term" value="P:DNA replication"/>
    <property type="evidence" value="ECO:0007669"/>
    <property type="project" value="UniProtKB-KW"/>
</dbReference>
<dbReference type="GO" id="GO:0006351">
    <property type="term" value="P:DNA-templated transcription"/>
    <property type="evidence" value="ECO:0007669"/>
    <property type="project" value="InterPro"/>
</dbReference>
<dbReference type="GO" id="GO:0034220">
    <property type="term" value="P:monoatomic ion transmembrane transport"/>
    <property type="evidence" value="ECO:0007669"/>
    <property type="project" value="UniProtKB-KW"/>
</dbReference>
<dbReference type="GO" id="GO:0006508">
    <property type="term" value="P:proteolysis"/>
    <property type="evidence" value="ECO:0007669"/>
    <property type="project" value="UniProtKB-KW"/>
</dbReference>
<dbReference type="GO" id="GO:0019065">
    <property type="term" value="P:receptor-mediated endocytosis of virus by host cell"/>
    <property type="evidence" value="ECO:0007669"/>
    <property type="project" value="UniProtKB-KW"/>
</dbReference>
<dbReference type="GO" id="GO:0044694">
    <property type="term" value="P:symbiont genome entry into host cell via pore formation in plasma membrane"/>
    <property type="evidence" value="ECO:0007669"/>
    <property type="project" value="UniProtKB-KW"/>
</dbReference>
<dbReference type="GO" id="GO:0039520">
    <property type="term" value="P:symbiont-mediated activation of host autophagy"/>
    <property type="evidence" value="ECO:0000250"/>
    <property type="project" value="UniProtKB"/>
</dbReference>
<dbReference type="GO" id="GO:0039545">
    <property type="term" value="P:symbiont-mediated suppression of host cytoplasmic pattern recognition receptor signaling pathway via inhibition of MAVS activity"/>
    <property type="evidence" value="ECO:0007669"/>
    <property type="project" value="UniProtKB-KW"/>
</dbReference>
<dbReference type="GO" id="GO:0039554">
    <property type="term" value="P:symbiont-mediated suppression of host cytoplasmic pattern recognition receptor signaling pathway via inhibition of MDA-5 activity"/>
    <property type="evidence" value="ECO:0007669"/>
    <property type="project" value="UniProtKB-KW"/>
</dbReference>
<dbReference type="GO" id="GO:0039540">
    <property type="term" value="P:symbiont-mediated suppression of host cytoplasmic pattern recognition receptor signaling pathway via inhibition of RIG-I activity"/>
    <property type="evidence" value="ECO:0007669"/>
    <property type="project" value="UniProtKB-KW"/>
</dbReference>
<dbReference type="GO" id="GO:0039522">
    <property type="term" value="P:symbiont-mediated suppression of host mRNA export from nucleus"/>
    <property type="evidence" value="ECO:0007669"/>
    <property type="project" value="UniProtKB-KW"/>
</dbReference>
<dbReference type="GO" id="GO:0039694">
    <property type="term" value="P:viral RNA genome replication"/>
    <property type="evidence" value="ECO:0007669"/>
    <property type="project" value="InterPro"/>
</dbReference>
<dbReference type="GO" id="GO:0019062">
    <property type="term" value="P:virion attachment to host cell"/>
    <property type="evidence" value="ECO:0007669"/>
    <property type="project" value="UniProtKB-KW"/>
</dbReference>
<dbReference type="CDD" id="cd23213">
    <property type="entry name" value="Enterovirus_RdRp"/>
    <property type="match status" value="1"/>
</dbReference>
<dbReference type="CDD" id="cd00205">
    <property type="entry name" value="rhv_like"/>
    <property type="match status" value="3"/>
</dbReference>
<dbReference type="FunFam" id="1.20.960.20:FF:000001">
    <property type="entry name" value="Genome polyprotein"/>
    <property type="match status" value="1"/>
</dbReference>
<dbReference type="FunFam" id="2.40.10.10:FF:000018">
    <property type="entry name" value="Genome polyprotein"/>
    <property type="match status" value="1"/>
</dbReference>
<dbReference type="FunFam" id="2.40.10.10:FF:000020">
    <property type="entry name" value="Genome polyprotein"/>
    <property type="match status" value="1"/>
</dbReference>
<dbReference type="FunFam" id="2.40.10.10:FF:000022">
    <property type="entry name" value="Genome polyprotein"/>
    <property type="match status" value="1"/>
</dbReference>
<dbReference type="FunFam" id="2.60.120.20:FF:000001">
    <property type="entry name" value="Genome polyprotein"/>
    <property type="match status" value="1"/>
</dbReference>
<dbReference type="FunFam" id="2.60.120.20:FF:000002">
    <property type="entry name" value="Genome polyprotein"/>
    <property type="match status" value="1"/>
</dbReference>
<dbReference type="FunFam" id="2.60.120.20:FF:000003">
    <property type="entry name" value="Genome polyprotein"/>
    <property type="match status" value="1"/>
</dbReference>
<dbReference type="FunFam" id="3.30.70.270:FF:000008">
    <property type="entry name" value="Genome polyprotein"/>
    <property type="match status" value="1"/>
</dbReference>
<dbReference type="FunFam" id="4.10.880.10:FF:000001">
    <property type="entry name" value="Genome polyprotein"/>
    <property type="match status" value="1"/>
</dbReference>
<dbReference type="FunFam" id="4.10.880.10:FF:000002">
    <property type="entry name" value="Genome polyprotein"/>
    <property type="match status" value="1"/>
</dbReference>
<dbReference type="Gene3D" id="1.20.960.20">
    <property type="match status" value="1"/>
</dbReference>
<dbReference type="Gene3D" id="2.60.120.20">
    <property type="match status" value="3"/>
</dbReference>
<dbReference type="Gene3D" id="3.30.70.270">
    <property type="match status" value="1"/>
</dbReference>
<dbReference type="Gene3D" id="6.10.20.20">
    <property type="entry name" value="Poliovirus 3A protein-like"/>
    <property type="match status" value="1"/>
</dbReference>
<dbReference type="Gene3D" id="4.10.880.10">
    <property type="entry name" value="Poliovirus 3D polymerase Domain 1 (Nucleotidyltransferase)"/>
    <property type="match status" value="2"/>
</dbReference>
<dbReference type="Gene3D" id="2.40.10.10">
    <property type="entry name" value="Trypsin-like serine proteases"/>
    <property type="match status" value="4"/>
</dbReference>
<dbReference type="InterPro" id="IPR043502">
    <property type="entry name" value="DNA/RNA_pol_sf"/>
</dbReference>
<dbReference type="InterPro" id="IPR000605">
    <property type="entry name" value="Helicase_SF3_ssDNA/RNA_vir"/>
</dbReference>
<dbReference type="InterPro" id="IPR014759">
    <property type="entry name" value="Helicase_SF3_ssRNA_vir"/>
</dbReference>
<dbReference type="InterPro" id="IPR027417">
    <property type="entry name" value="P-loop_NTPase"/>
</dbReference>
<dbReference type="InterPro" id="IPR014838">
    <property type="entry name" value="P3A"/>
</dbReference>
<dbReference type="InterPro" id="IPR036203">
    <property type="entry name" value="P3A_soluble_dom"/>
</dbReference>
<dbReference type="InterPro" id="IPR044067">
    <property type="entry name" value="PCV_3C_PRO"/>
</dbReference>
<dbReference type="InterPro" id="IPR000081">
    <property type="entry name" value="Peptidase_C3"/>
</dbReference>
<dbReference type="InterPro" id="IPR000199">
    <property type="entry name" value="Peptidase_C3A/C3B_picornavir"/>
</dbReference>
<dbReference type="InterPro" id="IPR009003">
    <property type="entry name" value="Peptidase_S1_PA"/>
</dbReference>
<dbReference type="InterPro" id="IPR043504">
    <property type="entry name" value="Peptidase_S1_PA_chymotrypsin"/>
</dbReference>
<dbReference type="InterPro" id="IPR003138">
    <property type="entry name" value="Pico_P1A"/>
</dbReference>
<dbReference type="InterPro" id="IPR002527">
    <property type="entry name" value="Pico_P2B"/>
</dbReference>
<dbReference type="InterPro" id="IPR001676">
    <property type="entry name" value="Picornavirus_capsid"/>
</dbReference>
<dbReference type="InterPro" id="IPR043128">
    <property type="entry name" value="Rev_trsase/Diguanyl_cyclase"/>
</dbReference>
<dbReference type="InterPro" id="IPR033703">
    <property type="entry name" value="Rhv-like"/>
</dbReference>
<dbReference type="InterPro" id="IPR001205">
    <property type="entry name" value="RNA-dir_pol_C"/>
</dbReference>
<dbReference type="InterPro" id="IPR007094">
    <property type="entry name" value="RNA-dir_pol_PSvirus"/>
</dbReference>
<dbReference type="InterPro" id="IPR029053">
    <property type="entry name" value="Viral_coat"/>
</dbReference>
<dbReference type="Pfam" id="PF08727">
    <property type="entry name" value="P3A"/>
    <property type="match status" value="1"/>
</dbReference>
<dbReference type="Pfam" id="PF00548">
    <property type="entry name" value="Peptidase_C3"/>
    <property type="match status" value="1"/>
</dbReference>
<dbReference type="Pfam" id="PF02226">
    <property type="entry name" value="Pico_P1A"/>
    <property type="match status" value="1"/>
</dbReference>
<dbReference type="Pfam" id="PF00947">
    <property type="entry name" value="Pico_P2A"/>
    <property type="match status" value="1"/>
</dbReference>
<dbReference type="Pfam" id="PF01552">
    <property type="entry name" value="Pico_P2B"/>
    <property type="match status" value="1"/>
</dbReference>
<dbReference type="Pfam" id="PF00680">
    <property type="entry name" value="RdRP_1"/>
    <property type="match status" value="1"/>
</dbReference>
<dbReference type="Pfam" id="PF00073">
    <property type="entry name" value="Rhv"/>
    <property type="match status" value="3"/>
</dbReference>
<dbReference type="Pfam" id="PF00910">
    <property type="entry name" value="RNA_helicase"/>
    <property type="match status" value="1"/>
</dbReference>
<dbReference type="SUPFAM" id="SSF56672">
    <property type="entry name" value="DNA/RNA polymerases"/>
    <property type="match status" value="1"/>
</dbReference>
<dbReference type="SUPFAM" id="SSF52540">
    <property type="entry name" value="P-loop containing nucleoside triphosphate hydrolases"/>
    <property type="match status" value="1"/>
</dbReference>
<dbReference type="SUPFAM" id="SSF88633">
    <property type="entry name" value="Positive stranded ssRNA viruses"/>
    <property type="match status" value="2"/>
</dbReference>
<dbReference type="SUPFAM" id="SSF89043">
    <property type="entry name" value="Soluble domain of poliovirus core protein 3a"/>
    <property type="match status" value="1"/>
</dbReference>
<dbReference type="SUPFAM" id="SSF50494">
    <property type="entry name" value="Trypsin-like serine proteases"/>
    <property type="match status" value="2"/>
</dbReference>
<dbReference type="PROSITE" id="PS51874">
    <property type="entry name" value="PCV_3C_PRO"/>
    <property type="match status" value="1"/>
</dbReference>
<dbReference type="PROSITE" id="PS50507">
    <property type="entry name" value="RDRP_SSRNA_POS"/>
    <property type="match status" value="1"/>
</dbReference>
<dbReference type="PROSITE" id="PS51218">
    <property type="entry name" value="SF3_HELICASE_2"/>
    <property type="match status" value="1"/>
</dbReference>
<organism>
    <name type="scientific">Poliovirus type 3 (strain 23127)</name>
    <dbReference type="NCBI Taxonomy" id="12087"/>
    <lineage>
        <taxon>Viruses</taxon>
        <taxon>Riboviria</taxon>
        <taxon>Orthornavirae</taxon>
        <taxon>Pisuviricota</taxon>
        <taxon>Pisoniviricetes</taxon>
        <taxon>Picornavirales</taxon>
        <taxon>Picornaviridae</taxon>
        <taxon>Ensavirinae</taxon>
        <taxon>Enterovirus</taxon>
        <taxon>Enterovirus C</taxon>
    </lineage>
</organism>
<sequence length="2206" mass="245733">MGAQVSSQKVGAHENSNRAYGGSTINYTTINYYKDSASNAASKQDYSQDPSKFTEPLKDVLIKTAPALNSPNVEACGYSDRVLQLTLGNSTITTQEAANSVVAYGRWPEFIRDDEANPVDQPTEPDVATSRFYTLDTVMWGKESRGWWWKLPDALRDMGLFGQNMYYHYLGRSGYTVHVQCNASKFHQGSLGVFAIPEFCLAGDSDTQRYTSYANANPGEKGGKFYAQFNKDTAVTSPKREFCPVDYLLGCGVLIGNAFVFPHQIINLRTNNSATLVLPYVNALSIDSMVKHNNWGIAILPLSPLDFAQDSSVEIPITVTIAPMCSEFNGLRNVTAPKLQGLPVLNTPGSNQYLTSDNHQSPCAIPEFDVTPPIDIPGEVKNVMELAEIDTMIPLNLENTKRNTMDMYRVRLSDSANLSGPILCLSLSPAADPRLSHTMLGEVLNYYTHWAGSLKFTFLFCGSMMATGKLLVAYAPPGAQPPTSRKEAMLGTHVIWDLGLQSSCTMVVPWISNVTYRQTTQDSFTEGGYISMFYQTRIVVPLSTPKAMDMLGFVSACNDFSVRLLRDTTHISQAAMPQGVDDLITEVAQNALALSLPKPQSNLPDTKASGPAHSKEVPTLTAVETGATNPLVPSDTVQTRHVIQQRSRSESTIESFFARGACVAIIEVDNEQPATNVQKLFATWRITYKDTVQLRRKLEFFTYSRFDMEFTFVVTANFTNSNNGHALNQVYQIMYIPPGAPTPKSWDDYTWQTSSNPSIFYTYGAAPARISVPYVGLANAYSHFYDGFAKVPLKSDANDQVGDSLYSAMAVDDFGVLAIRVVNDHNPTKVTSKVRVYMKPKHVRVWCPRPPRAVPYYGPGVDYKDGLAPLSEKGLTTYGFGHQNKAVYTAGYKICNYHLATQEDLQNAVSVMWNRDLLVTESKAQGIDSIARCNCSTGVYYCESRSRYYPVSFVGPTFQYMEANDYYPARYQSHMLIGHGFASPGDCGGILRCQHGVIGIITAGGEGLVAFSDIRDLYAYEEEAMEQGISSYVESLGAAFGSGFTQQIGDKIIELTGMVTSTITEKLLKNLIKIVSSLVIITRNYDDTTTVLATLALLGCDVSPWQWLKKKACDILEIPYVMRQGDSWLKKFTEACNAAKGLEWVSNKISKFIDWLREKIIPQARDKLEFVTKLKQLEMLENQIATIHQSCPSQEHQEILFNNVRWLSIQSKRFAPLYALEAKRIQKLEHTINNYIQFKSKHRIEPVCLLVHGSPGTGKSVATNLIARAIAEKENTSTYSLPPDPSHFDGYKQQGVVIMDDLNQNPDGADMKLFCQMVSTVEFIPPMASLEEKGILFTSNYVLASTNSSRITPPTVAHSDALARRFAFDMDIQVMSEYSRDGKLNMTMATEMCKNCHQPANFKRCCPLVCGKAIQLMDKSSRVRYSIDQITTMIVNEKNRRSNIGNCMEALFQGPLQYKDLKIDIKTTPPPECINDLLQAVDSQEVRDYCEKKGWIVNITSQVQTERNINRAMTILQAVTTFAAVAGVVYVMYKLFAGHQGAYTGLPNKRPNVPTIRTAKVQGPGFDYAVAMAKRNILTATTSKGEFTMLGVHDNVAILPTHASPGETIVIDGKEIEVLDAKALEDQAGTNLEITIVTLKRNEKFRDIRPHIPAQITETNDGVLIVNTSKYPNMYVPVGAVTEQGYLNLGGRQTARTLMYNFPTRAGQCGGVITCTGKVIGMHVGGNGSHGFAAALKRSYFTQSQGEIQWMRPSKEVGYPIINAPSKTKLEPSAFHYVFEGVKEPAVLTKNDPRFKTGFEEAIFSKYVGNKITEVDEYMKEAVDHYAGQLMSLDINTEQMCLEDAMYGTDGLEALDLSTSAGYPYVTMGKKKRDILNKQTRDTKEMQRLLDTYGINLPLVTYVKDELRSKTKVEQGKSRLIEASSLNDSVAMRMAFGNLYAAFHKNPGVVTGSAVGCDPDLFWSKIPVLMEEKLFAFDYTGYDASLSPAWFEALKMVLEKIGFGDRVDYIDYLNHSHHLYKNKTYCVKGGMPSGCSGTSIFNSMINNLIIRTLLLKTYKGIDLDHLKMIAYGDDVIASYPHEVDASLLAQSGKDYGLTMTPADKSATFETVTWENVTFLKRFFRADERYPFLIHPVMPMKEIHESIRWTKDPRNTQDHVRSLCLLAWHNGEDEYNKFLAMIRSVPIGRALLLPEYSTLYRRWLDSF</sequence>
<accession>P06209</accession>
<feature type="initiator methionine" description="Removed; by host" evidence="1">
    <location>
        <position position="1"/>
    </location>
</feature>
<feature type="chain" id="PRO_0000426641" description="Genome polyprotein">
    <location>
        <begin position="2"/>
        <end position="2206"/>
    </location>
</feature>
<feature type="chain" id="PRO_0000426642" description="P1">
    <location>
        <begin position="2"/>
        <end position="878"/>
    </location>
</feature>
<feature type="chain" id="PRO_0000426643" description="Capsid protein VP0">
    <location>
        <begin position="2"/>
        <end position="340"/>
    </location>
</feature>
<feature type="chain" id="PRO_0000426644" description="Capsid protein VP4">
    <location>
        <begin position="2"/>
        <end position="69"/>
    </location>
</feature>
<feature type="chain" id="PRO_0000426645" description="Capsid protein VP2">
    <location>
        <begin position="70"/>
        <end position="340"/>
    </location>
</feature>
<feature type="chain" id="PRO_0000426646" description="Capsid protein VP3">
    <location>
        <begin position="341"/>
        <end position="578"/>
    </location>
</feature>
<feature type="chain" id="PRO_0000426647" description="Capsid protein VP1">
    <location>
        <begin position="579"/>
        <end position="878"/>
    </location>
</feature>
<feature type="chain" id="PRO_0000426648" description="P2">
    <location>
        <begin position="879"/>
        <end position="1453"/>
    </location>
</feature>
<feature type="chain" id="PRO_0000426649" description="Protease 2A">
    <location>
        <begin position="879"/>
        <end position="1027"/>
    </location>
</feature>
<feature type="chain" id="PRO_0000040129" description="Protein 2B">
    <location>
        <begin position="1028"/>
        <end position="1124"/>
    </location>
</feature>
<feature type="chain" id="PRO_0000040130" description="Protein 2C">
    <location>
        <begin position="1125"/>
        <end position="1453"/>
    </location>
</feature>
<feature type="chain" id="PRO_0000426650" description="P3">
    <location>
        <begin position="1454"/>
        <end position="2206"/>
    </location>
</feature>
<feature type="chain" id="PRO_0000426651" description="Protein 3AB">
    <location>
        <begin position="1454"/>
        <end position="1562"/>
    </location>
</feature>
<feature type="chain" id="PRO_0000040131" description="Protein 3A">
    <location>
        <begin position="1454"/>
        <end position="1540"/>
    </location>
</feature>
<feature type="chain" id="PRO_0000426652" description="Viral protein genome-linked">
    <location>
        <begin position="1541"/>
        <end position="1562"/>
    </location>
</feature>
<feature type="chain" id="PRO_0000426653" description="Protein 3CD">
    <location>
        <begin position="1563"/>
        <end position="2206"/>
    </location>
</feature>
<feature type="chain" id="PRO_0000426654" description="Protease 3C">
    <location>
        <begin position="1563"/>
        <end position="1745"/>
    </location>
</feature>
<feature type="chain" id="PRO_0000426655" description="RNA-directed RNA polymerase">
    <location>
        <begin position="1746"/>
        <end position="2206"/>
    </location>
</feature>
<feature type="topological domain" description="Cytoplasmic" evidence="8">
    <location>
        <begin position="2"/>
        <end position="1517"/>
    </location>
</feature>
<feature type="intramembrane region" evidence="8">
    <location>
        <begin position="1518"/>
        <end position="1533"/>
    </location>
</feature>
<feature type="topological domain" description="Cytoplasmic" evidence="8">
    <location>
        <begin position="1534"/>
        <end position="2206"/>
    </location>
</feature>
<feature type="domain" description="SF3 helicase" evidence="10">
    <location>
        <begin position="1229"/>
        <end position="1385"/>
    </location>
</feature>
<feature type="domain" description="Peptidase C3" evidence="11">
    <location>
        <begin position="1563"/>
        <end position="1741"/>
    </location>
</feature>
<feature type="domain" description="RdRp catalytic" evidence="9">
    <location>
        <begin position="1972"/>
        <end position="2087"/>
    </location>
</feature>
<feature type="zinc finger region" description="C4-type" evidence="1">
    <location>
        <begin position="1393"/>
        <end position="1410"/>
    </location>
</feature>
<feature type="region of interest" description="Amphipathic alpha-helix" evidence="8">
    <location>
        <begin position="579"/>
        <end position="603"/>
    </location>
</feature>
<feature type="region of interest" description="Amphipathic alpha-helix" evidence="8">
    <location>
        <begin position="579"/>
        <end position="599"/>
    </location>
</feature>
<feature type="region of interest" description="Oligomerization" evidence="1">
    <location>
        <begin position="1125"/>
        <end position="1263"/>
    </location>
</feature>
<feature type="region of interest" description="Membrane-binding" evidence="1">
    <location>
        <begin position="1125"/>
        <end position="1197"/>
    </location>
</feature>
<feature type="region of interest" description="RNA-binding" evidence="1">
    <location>
        <begin position="1146"/>
        <end position="1150"/>
    </location>
</feature>
<feature type="region of interest" description="RNA-binding" evidence="1">
    <location>
        <begin position="1437"/>
        <end position="1444"/>
    </location>
</feature>
<feature type="region of interest" description="Oligomerization" evidence="1">
    <location>
        <begin position="1448"/>
        <end position="1453"/>
    </location>
</feature>
<feature type="active site" description="For protease 2A activity" evidence="1">
    <location>
        <position position="898"/>
    </location>
</feature>
<feature type="active site" description="For protease 2A activity" evidence="1">
    <location>
        <position position="916"/>
    </location>
</feature>
<feature type="active site" description="For protease 2A activity" evidence="1">
    <location>
        <position position="987"/>
    </location>
</feature>
<feature type="active site" description="For protease 3C activity" evidence="11">
    <location>
        <position position="1602"/>
    </location>
</feature>
<feature type="active site" description="For protease 3C activity" evidence="11">
    <location>
        <position position="1633"/>
    </location>
</feature>
<feature type="active site" description="For protease 3C activity" evidence="11">
    <location>
        <position position="1709"/>
    </location>
</feature>
<feature type="binding site" evidence="7">
    <location>
        <position position="933"/>
    </location>
    <ligand>
        <name>Zn(2+)</name>
        <dbReference type="ChEBI" id="CHEBI:29105"/>
        <label>1</label>
        <note>structural</note>
    </ligand>
</feature>
<feature type="binding site" evidence="7">
    <location>
        <position position="935"/>
    </location>
    <ligand>
        <name>Zn(2+)</name>
        <dbReference type="ChEBI" id="CHEBI:29105"/>
        <label>1</label>
        <note>structural</note>
    </ligand>
</feature>
<feature type="binding site" evidence="7">
    <location>
        <position position="993"/>
    </location>
    <ligand>
        <name>Zn(2+)</name>
        <dbReference type="ChEBI" id="CHEBI:29105"/>
        <label>1</label>
        <note>structural</note>
    </ligand>
</feature>
<feature type="binding site" evidence="7">
    <location>
        <position position="995"/>
    </location>
    <ligand>
        <name>Zn(2+)</name>
        <dbReference type="ChEBI" id="CHEBI:29105"/>
        <label>1</label>
        <note>structural</note>
    </ligand>
</feature>
<feature type="binding site" evidence="10">
    <location>
        <begin position="1253"/>
        <end position="1260"/>
    </location>
    <ligand>
        <name>ATP</name>
        <dbReference type="ChEBI" id="CHEBI:30616"/>
    </ligand>
</feature>
<feature type="binding site" evidence="1">
    <location>
        <position position="1393"/>
    </location>
    <ligand>
        <name>Zn(2+)</name>
        <dbReference type="ChEBI" id="CHEBI:29105"/>
        <label>2</label>
    </ligand>
</feature>
<feature type="binding site" evidence="1">
    <location>
        <position position="1396"/>
    </location>
    <ligand>
        <name>Zn(2+)</name>
        <dbReference type="ChEBI" id="CHEBI:29105"/>
        <label>2</label>
    </ligand>
</feature>
<feature type="binding site" evidence="1">
    <location>
        <position position="1405"/>
    </location>
    <ligand>
        <name>Zn(2+)</name>
        <dbReference type="ChEBI" id="CHEBI:29105"/>
        <label>2</label>
    </ligand>
</feature>
<feature type="binding site" evidence="1">
    <location>
        <position position="1410"/>
    </location>
    <ligand>
        <name>Zn(2+)</name>
        <dbReference type="ChEBI" id="CHEBI:29105"/>
        <label>2</label>
    </ligand>
</feature>
<feature type="binding site" evidence="1">
    <location>
        <position position="1978"/>
    </location>
    <ligand>
        <name>Mg(2+)</name>
        <dbReference type="ChEBI" id="CHEBI:18420"/>
        <label>1</label>
        <note>catalytic; for RdRp activity</note>
    </ligand>
</feature>
<feature type="binding site" evidence="1">
    <location>
        <position position="1978"/>
    </location>
    <ligand>
        <name>Mg(2+)</name>
        <dbReference type="ChEBI" id="CHEBI:18420"/>
        <label>2</label>
        <note>catalytic; for RdRp activity</note>
    </ligand>
</feature>
<feature type="binding site" evidence="1">
    <location>
        <position position="2073"/>
    </location>
    <ligand>
        <name>Mg(2+)</name>
        <dbReference type="ChEBI" id="CHEBI:18420"/>
        <label>1</label>
        <note>catalytic; for RdRp activity</note>
    </ligand>
</feature>
<feature type="binding site" evidence="1">
    <location>
        <position position="2073"/>
    </location>
    <ligand>
        <name>Mg(2+)</name>
        <dbReference type="ChEBI" id="CHEBI:18420"/>
        <label>2</label>
        <note>catalytic; for RdRp activity</note>
    </ligand>
</feature>
<feature type="site" description="Cleavage; by autolysis" evidence="1">
    <location>
        <begin position="69"/>
        <end position="70"/>
    </location>
</feature>
<feature type="site" description="Cleavage; by protease 3C" evidence="2">
    <location>
        <begin position="340"/>
        <end position="341"/>
    </location>
</feature>
<feature type="site" description="Cleavage; by autolysis" evidence="2">
    <location>
        <begin position="878"/>
        <end position="879"/>
    </location>
</feature>
<feature type="site" description="Cleavage; by protease 3C" evidence="2">
    <location>
        <begin position="1027"/>
        <end position="1028"/>
    </location>
</feature>
<feature type="site" description="Cleavage; by protease 3C" evidence="2">
    <location>
        <begin position="1124"/>
        <end position="1125"/>
    </location>
</feature>
<feature type="site" description="Involved in the interaction with host RTN3" evidence="6">
    <location>
        <position position="1149"/>
    </location>
</feature>
<feature type="site" description="Cleavage; by protease 3C" evidence="2">
    <location>
        <begin position="1453"/>
        <end position="1454"/>
    </location>
</feature>
<feature type="site" description="Cleavage; by protease 3C" evidence="2">
    <location>
        <begin position="1540"/>
        <end position="1541"/>
    </location>
</feature>
<feature type="site" description="Cleavage; by protease 3C" evidence="2">
    <location>
        <begin position="1562"/>
        <end position="1563"/>
    </location>
</feature>
<feature type="site" description="Cleavage; by protease 3C" evidence="2">
    <location>
        <begin position="1745"/>
        <end position="1746"/>
    </location>
</feature>
<feature type="modified residue" description="O-(5'-phospho-RNA)-tyrosine" evidence="1">
    <location>
        <position position="1543"/>
    </location>
</feature>
<feature type="lipid moiety-binding region" description="N-myristoyl glycine; by host" evidence="1">
    <location>
        <position position="2"/>
    </location>
</feature>
<organismHost>
    <name type="scientific">Homo sapiens</name>
    <name type="common">Human</name>
    <dbReference type="NCBI Taxonomy" id="9606"/>
</organismHost>
<protein>
    <recommendedName>
        <fullName>Genome polyprotein</fullName>
    </recommendedName>
    <component>
        <recommendedName>
            <fullName>P3</fullName>
        </recommendedName>
    </component>
    <component>
        <recommendedName>
            <fullName>Protein 3AB</fullName>
        </recommendedName>
    </component>
    <component>
        <recommendedName>
            <fullName>P1</fullName>
        </recommendedName>
    </component>
    <component>
        <recommendedName>
            <fullName>Capsid protein VP0</fullName>
        </recommendedName>
        <alternativeName>
            <fullName>VP4-VP2</fullName>
        </alternativeName>
    </component>
    <component>
        <recommendedName>
            <fullName>Capsid protein VP4</fullName>
        </recommendedName>
        <alternativeName>
            <fullName>P1A</fullName>
        </alternativeName>
        <alternativeName>
            <fullName>Virion protein 4</fullName>
        </alternativeName>
    </component>
    <component>
        <recommendedName>
            <fullName>Capsid protein VP2</fullName>
        </recommendedName>
        <alternativeName>
            <fullName>P1B</fullName>
        </alternativeName>
        <alternativeName>
            <fullName>Virion protein 2</fullName>
        </alternativeName>
    </component>
    <component>
        <recommendedName>
            <fullName>Capsid protein VP3</fullName>
        </recommendedName>
        <alternativeName>
            <fullName>P1C</fullName>
        </alternativeName>
        <alternativeName>
            <fullName>Virion protein 3</fullName>
        </alternativeName>
    </component>
    <component>
        <recommendedName>
            <fullName>Capsid protein VP1</fullName>
        </recommendedName>
        <alternativeName>
            <fullName>P1D</fullName>
        </alternativeName>
        <alternativeName>
            <fullName>Virion protein 1</fullName>
        </alternativeName>
    </component>
    <component>
        <recommendedName>
            <fullName>P2</fullName>
        </recommendedName>
    </component>
    <component>
        <recommendedName>
            <fullName>Protease 2A</fullName>
            <shortName>P2A</shortName>
            <ecNumber evidence="1">3.4.22.29</ecNumber>
        </recommendedName>
        <alternativeName>
            <fullName>Picornain 2A</fullName>
        </alternativeName>
        <alternativeName>
            <fullName>Protein 2A</fullName>
        </alternativeName>
    </component>
    <component>
        <recommendedName>
            <fullName>Protein 2B</fullName>
            <shortName>P2B</shortName>
        </recommendedName>
    </component>
    <component>
        <recommendedName>
            <fullName>Protein 2C</fullName>
            <shortName>P2C</shortName>
            <ecNumber evidence="1">3.6.1.15</ecNumber>
        </recommendedName>
    </component>
    <component>
        <recommendedName>
            <fullName>Protein 3A</fullName>
            <shortName>P3A</shortName>
        </recommendedName>
    </component>
    <component>
        <recommendedName>
            <fullName>Viral protein genome-linked</fullName>
            <shortName>VPg</shortName>
        </recommendedName>
        <alternativeName>
            <fullName>Protein 3B</fullName>
            <shortName>P3B</shortName>
        </alternativeName>
    </component>
    <component>
        <recommendedName>
            <fullName>Protein 3CD</fullName>
            <ecNumber>3.4.22.28</ecNumber>
        </recommendedName>
    </component>
    <component>
        <recommendedName>
            <fullName evidence="11">Protease 3C</fullName>
            <ecNumber evidence="11">3.4.22.28</ecNumber>
        </recommendedName>
        <alternativeName>
            <fullName evidence="11">Picornain 3C</fullName>
            <shortName evidence="11">P3C</shortName>
        </alternativeName>
    </component>
    <component>
        <recommendedName>
            <fullName evidence="9">RNA-directed RNA polymerase</fullName>
            <shortName>RdRp</shortName>
            <ecNumber evidence="9">2.7.7.48</ecNumber>
        </recommendedName>
        <alternativeName>
            <fullName>3D polymerase</fullName>
            <shortName>3Dpol</shortName>
        </alternativeName>
        <alternativeName>
            <fullName>Protein 3D</fullName>
            <shortName>3D</shortName>
        </alternativeName>
    </component>
</protein>
<keyword id="KW-1072">Activation of host autophagy by virus</keyword>
<keyword id="KW-0067">ATP-binding</keyword>
<keyword id="KW-0068">Autocatalytic cleavage</keyword>
<keyword id="KW-0167">Capsid protein</keyword>
<keyword id="KW-1167">Clathrin- and caveolin-independent endocytosis of virus by host</keyword>
<keyword id="KW-0191">Covalent protein-RNA linkage</keyword>
<keyword id="KW-0235">DNA replication</keyword>
<keyword id="KW-1262">Eukaryotic host gene expression shutoff by virus</keyword>
<keyword id="KW-1191">Eukaryotic host transcription shutoff by virus</keyword>
<keyword id="KW-1193">Eukaryotic host translation shutoff by virus</keyword>
<keyword id="KW-0347">Helicase</keyword>
<keyword id="KW-1035">Host cytoplasm</keyword>
<keyword id="KW-1036">Host cytoplasmic vesicle</keyword>
<keyword id="KW-1190">Host gene expression shutoff by virus</keyword>
<keyword id="KW-1043">Host membrane</keyword>
<keyword id="KW-1192">Host mRNA suppression by virus</keyword>
<keyword id="KW-1048">Host nucleus</keyword>
<keyword id="KW-0945">Host-virus interaction</keyword>
<keyword id="KW-0378">Hydrolase</keyword>
<keyword id="KW-1111">Inhibition of eukaryotic host transcription initiation by virus</keyword>
<keyword id="KW-1090">Inhibition of host innate immune response by virus</keyword>
<keyword id="KW-1097">Inhibition of host MAVS by virus</keyword>
<keyword id="KW-1089">Inhibition of host MDA5 by virus</keyword>
<keyword id="KW-1099">Inhibition of host mRNA nuclear export by virus</keyword>
<keyword id="KW-1088">Inhibition of host RIG-I by virus</keyword>
<keyword id="KW-1113">Inhibition of host RLR pathway by virus</keyword>
<keyword id="KW-0407">Ion channel</keyword>
<keyword id="KW-0406">Ion transport</keyword>
<keyword id="KW-0449">Lipoprotein</keyword>
<keyword id="KW-0460">Magnesium</keyword>
<keyword id="KW-0472">Membrane</keyword>
<keyword id="KW-0479">Metal-binding</keyword>
<keyword id="KW-0519">Myristate</keyword>
<keyword id="KW-0547">Nucleotide-binding</keyword>
<keyword id="KW-0548">Nucleotidyltransferase</keyword>
<keyword id="KW-0597">Phosphoprotein</keyword>
<keyword id="KW-1172">Pore-mediated penetration of viral genome into host cell</keyword>
<keyword id="KW-0645">Protease</keyword>
<keyword id="KW-0677">Repeat</keyword>
<keyword id="KW-0694">RNA-binding</keyword>
<keyword id="KW-0696">RNA-directed RNA polymerase</keyword>
<keyword id="KW-1143">T=pseudo3 icosahedral capsid protein</keyword>
<keyword id="KW-0788">Thiol protease</keyword>
<keyword id="KW-0808">Transferase</keyword>
<keyword id="KW-0813">Transport</keyword>
<keyword id="KW-1161">Viral attachment to host cell</keyword>
<keyword id="KW-0899">Viral immunoevasion</keyword>
<keyword id="KW-1182">Viral ion channel</keyword>
<keyword id="KW-1162">Viral penetration into host cytoplasm</keyword>
<keyword id="KW-0693">Viral RNA replication</keyword>
<keyword id="KW-0946">Virion</keyword>
<keyword id="KW-1164">Virus endocytosis by host</keyword>
<keyword id="KW-1160">Virus entry into host cell</keyword>
<keyword id="KW-0862">Zinc</keyword>
<keyword id="KW-0863">Zinc-finger</keyword>
<evidence type="ECO:0000250" key="1">
    <source>
        <dbReference type="UniProtKB" id="P03300"/>
    </source>
</evidence>
<evidence type="ECO:0000250" key="2">
    <source>
        <dbReference type="UniProtKB" id="P03301"/>
    </source>
</evidence>
<evidence type="ECO:0000250" key="3">
    <source>
        <dbReference type="UniProtKB" id="P03303"/>
    </source>
</evidence>
<evidence type="ECO:0000250" key="4">
    <source>
        <dbReference type="UniProtKB" id="P03313"/>
    </source>
</evidence>
<evidence type="ECO:0000250" key="5">
    <source>
        <dbReference type="UniProtKB" id="P04936"/>
    </source>
</evidence>
<evidence type="ECO:0000250" key="6">
    <source>
        <dbReference type="UniProtKB" id="Q66478"/>
    </source>
</evidence>
<evidence type="ECO:0000250" key="7">
    <source>
        <dbReference type="UniProtKB" id="Q9QF31"/>
    </source>
</evidence>
<evidence type="ECO:0000255" key="8"/>
<evidence type="ECO:0000255" key="9">
    <source>
        <dbReference type="PROSITE-ProRule" id="PRU00539"/>
    </source>
</evidence>
<evidence type="ECO:0000255" key="10">
    <source>
        <dbReference type="PROSITE-ProRule" id="PRU00551"/>
    </source>
</evidence>
<evidence type="ECO:0000255" key="11">
    <source>
        <dbReference type="PROSITE-ProRule" id="PRU01222"/>
    </source>
</evidence>
<evidence type="ECO:0000305" key="12"/>
<proteinExistence type="inferred from homology"/>
<comment type="function">
    <molecule>Capsid protein VP1</molecule>
    <text evidence="1">Forms an icosahedral capsid of pseudo T=3 symmetry with capsid proteins VP2 and VP3 (By similarity). The capsid is 300 Angstroms in diameter, composed of 60 copies of each capsid protein and enclosing the viral positive strand RNA genome (By similarity). Capsid protein VP1 mainly forms the vertices of the capsid (By similarity). Capsid protein VP1 interacts with host cell receptor PVR to provide virion attachment to target host cells (By similarity). This attachment induces virion internalization predominantly through clathrin- and caveolin-independent endocytosis in Hela cells and through caveolin-mediated endocytosis in brain microvascular endothelial cells (By similarity). Tyrosine kinases are probably involved in the entry process (By similarity). Virus binding to PVR induces increased junctional permeability and rearrangement of junctional proteins (By similarity). Modulation of endothelial tight junctions, as well as cytolytic infection of endothelial cells themselves, may result in loss of endothelial integrity which may help the virus to reach the CNS (By similarity). After binding to its receptor, the capsid undergoes conformational changes (By similarity). Capsid protein VP1 N-terminus (that contains an amphipathic alpha-helix) and capsid protein VP4 are externalized (By similarity). Together, they shape a pore in the host membrane through which viral genome is translocated to host cell cytoplasm (By similarity).</text>
</comment>
<comment type="function">
    <molecule>Capsid protein VP2</molecule>
    <text evidence="1">Forms an icosahedral capsid of pseudo T=3 symmetry with capsid proteins VP2 and VP3 (By similarity). The capsid is 300 Angstroms in diameter, composed of 60 copies of each capsid protein and enclosing the viral positive strand RNA genome (By similarity).</text>
</comment>
<comment type="function">
    <molecule>Capsid protein VP3</molecule>
    <text evidence="1">Forms an icosahedral capsid of pseudo T=3 symmetry with capsid proteins VP2 and VP3 (By similarity). The capsid is 300 Angstroms in diameter, composed of 60 copies of each capsid protein and enclosing the viral positive strand RNA genome (By similarity).</text>
</comment>
<comment type="function">
    <molecule>Capsid protein VP4</molecule>
    <text evidence="1">Lies on the inner surface of the capsid shell (By similarity). After binding to the host receptor, the capsid undergoes conformational changes (By similarity). Capsid protein VP4 is released, Capsid protein VP1 N-terminus is externalized, and together, they shape a pore in the host membrane through which the viral genome is translocated into the host cell cytoplasm (By similarity).</text>
</comment>
<comment type="function">
    <molecule>Capsid protein VP0</molecule>
    <text evidence="1">Component of immature procapsids, which is cleaved into capsid proteins VP4 and VP2 after maturation (By similarity). Allows the capsid to remain inactive before the maturation step (By similarity).</text>
</comment>
<comment type="function">
    <molecule>Protease 2A</molecule>
    <text evidence="1 2">Cysteine protease that cleaves viral polyprotein and specific host proteins (By similarity). It is responsible for the autocatalytic cleavage between the P1 and P2 regions, which is the first cleavage occurring in the polyprotein (By similarity). Also cleaves the host translation initiation factor EIF4G1, in order to shut down the capped cellular mRNA translation (By similarity). Inhibits the host nucleus-cytoplasm protein and RNA trafficking by cleaving host members of the nuclear pores including NUP98, NUP62 and NUP153 (By similarity). Counteracts stress granule formation probably by antagonizing its assembly or promoting its dissassembly (By similarity). Cleaves and inhibits host IFIH1/MDA5, thereby inhibiting the type-I IFN production and the establishment of the antiviral state (By similarity). Cleaves and inhibits host MAVS, thereby inhibiting the type-I IFN production and the establishment of the antiviral state (By similarity).</text>
</comment>
<comment type="function">
    <molecule>Protein 2B</molecule>
    <text evidence="1">Plays an essential role in the virus replication cycle by acting as a viroporin. Creates a pore in the host endoplasmic reticulum and as a consequence releases Ca2+ in the cytoplasm of infected cell. In turn, high levels of cytoplasmic calcium may trigger membrane trafficking and transport of viral ER-associated proteins to viroplasms, sites of viral genome replication.</text>
</comment>
<comment type="function">
    <molecule>Protein 2C</molecule>
    <text evidence="1">Induces and associates with structural rearrangements of intracellular membranes. Displays RNA-binding, nucleotide binding and NTPase activities. May play a role in virion morphogenesis and viral RNA encapsidation by interacting with the capsid protein VP3.</text>
</comment>
<comment type="function">
    <molecule>Protein 3AB</molecule>
    <text evidence="1">Localizes the viral replication complex to the surface of membranous vesicles. Together with protein 3CD binds the Cis-Active RNA Element (CRE) which is involved in RNA synthesis initiation. Acts as a cofactor to stimulate the activity of 3D polymerase, maybe through a nucleid acid chaperone activity.</text>
</comment>
<comment type="function">
    <molecule>Protein 3A</molecule>
    <text evidence="1">Localizes the viral replication complex to the surface of membranous vesicles (By similarity). It inhibits host cell endoplasmic reticulum-to-Golgi apparatus transport and causes the disassembly of the Golgi complex, possibly through GBF1 interaction (By similarity). This would result in depletion of MHC, trail receptors and IFN receptors at the host cell surface (By similarity). Plays an essential role in viral RNA replication by recruiting ACBD3 and PI4KB at the viral replication sites, thereby allowing the formation of the rearranged membranous structures where viral replication takes place (By similarity).</text>
</comment>
<comment type="function">
    <molecule>Viral protein genome-linked</molecule>
    <text evidence="1">Acts as a primer for viral RNA replication and remains covalently bound to viral genomic RNA. VPg is uridylylated prior to priming replication into VPg-pUpU. The oriI viral genomic sequence may act as a template for this. The VPg-pUpU is then used as primer on the genomic RNA poly(A) by the RNA-dependent RNA polymerase to replicate the viral genome. During genome replication, the VPg-RNA linkage is removed by the host TDP2, thereby accelerating replication. During the late stage of the replication cycle, host TDP2 is excluded from sites of viral RNA synthesis and encapsidation, allowing for the generation of progeny virions.</text>
</comment>
<comment type="function">
    <molecule>Protein 3CD</molecule>
    <text evidence="1">Involved in the viral replication complex and viral polypeptide maturation. It exhibits protease activity with a specificity and catalytic efficiency that is different from protease 3C. Protein 3CD lacks polymerase activity. Protein 3CD binds to the 5'UTR of the viral genome.</text>
</comment>
<comment type="function">
    <molecule>Protease 3C</molecule>
    <text evidence="1 3">Major viral protease that mediates proteolytic processing of the polyprotein (By similarity). Cleaves host EIF5B, contributing to host translation shutoff (By similarity). Also cleaves host PABPC1, contributing to host translation shutoff (By similarity). Cleaves host RIGI and thus contributes to the inhibition of type I interferon production (By similarity). Cleaves host NLRP1, triggers host N-glycine-mediated degradation of the autoinhibitory NLRP1 N-terminal fragment (By similarity). Inhibits the integrated stress response (ISR) in the infected cell by cleaving host G3BP1 (By similarity). Stress granule formation is thus inhibited, which allows protein synthesis and viral replication (By similarity).</text>
</comment>
<comment type="function">
    <molecule>RNA-directed RNA polymerase</molecule>
    <text evidence="1">Replicates the viral genomic RNA on the surface of intracellular membranes. May form linear arrays of subunits that propagate along a strong head-to-tail interaction called interface-I. Covalently attaches UMP to a tyrosine of VPg, which is used to prime RNA synthesis. The positive stranded RNA genome is first replicated at virus induced membranous vesicles, creating a dsRNA genomic replication form. This dsRNA is then used as template to synthesize positive stranded RNA genomes. ss(+)RNA genomes are either translated, replicated or encapsidated.</text>
</comment>
<comment type="catalytic activity">
    <molecule>Protein 2C</molecule>
    <reaction evidence="1">
        <text>a ribonucleoside 5'-triphosphate + H2O = a ribonucleoside 5'-diphosphate + phosphate + H(+)</text>
        <dbReference type="Rhea" id="RHEA:23680"/>
        <dbReference type="ChEBI" id="CHEBI:15377"/>
        <dbReference type="ChEBI" id="CHEBI:15378"/>
        <dbReference type="ChEBI" id="CHEBI:43474"/>
        <dbReference type="ChEBI" id="CHEBI:57930"/>
        <dbReference type="ChEBI" id="CHEBI:61557"/>
        <dbReference type="EC" id="3.6.1.15"/>
    </reaction>
</comment>
<comment type="catalytic activity">
    <molecule>Protease 2A</molecule>
    <reaction evidence="1">
        <text>Selective cleavage of Tyr-|-Gly bond in the picornavirus polyprotein.</text>
        <dbReference type="EC" id="3.4.22.29"/>
    </reaction>
</comment>
<comment type="catalytic activity">
    <molecule>RNA-directed RNA polymerase</molecule>
    <reaction evidence="9">
        <text>RNA(n) + a ribonucleoside 5'-triphosphate = RNA(n+1) + diphosphate</text>
        <dbReference type="Rhea" id="RHEA:21248"/>
        <dbReference type="Rhea" id="RHEA-COMP:14527"/>
        <dbReference type="Rhea" id="RHEA-COMP:17342"/>
        <dbReference type="ChEBI" id="CHEBI:33019"/>
        <dbReference type="ChEBI" id="CHEBI:61557"/>
        <dbReference type="ChEBI" id="CHEBI:140395"/>
        <dbReference type="EC" id="2.7.7.48"/>
    </reaction>
</comment>
<comment type="catalytic activity">
    <molecule>Protease 3C</molecule>
    <reaction evidence="11">
        <text>Selective cleavage of Gln-|-Gly bond in the poliovirus polyprotein. In other picornavirus reactions Glu may be substituted for Gln, and Ser or Thr for Gly.</text>
        <dbReference type="EC" id="3.4.22.28"/>
    </reaction>
</comment>
<comment type="cofactor">
    <molecule>RNA-directed RNA polymerase</molecule>
    <cofactor evidence="1">
        <name>Mg(2+)</name>
        <dbReference type="ChEBI" id="CHEBI:18420"/>
    </cofactor>
    <text evidence="1 4">Binds 2 magnesium ions that constitute a dinuclear catalytic metal center (By similarity). The magnesium ions are not prebound but only present for catalysis (By similarity). Requires the presence of 3CDpro or 3CPro (By similarity).</text>
</comment>
<comment type="activity regulation">
    <molecule>RNA-directed RNA polymerase</molecule>
    <text evidence="1">Replication or transcription is subject to high level of random mutations by the nucleotide analog ribavirin.</text>
</comment>
<comment type="subunit">
    <molecule>Capsid protein VP0</molecule>
    <text evidence="1">Interacts with capsid protein VP1 and capsid protein VP3 to form heterotrimeric protomers.</text>
</comment>
<comment type="subunit">
    <molecule>Capsid protein VP1</molecule>
    <text evidence="1">Interacts with capsid protein VP0, and capsid protein VP3 to form heterotrimeric protomers (By similarity). Interacts with human PVR (By similarity). Five protomers subsequently associate to form pentamers which serve as building blocks for the capsid (By similarity). Interacts with capsid protein VP2, capsid protein VP3 and capsid protein VP4 following cleavage of capsid protein VP0 (By similarity).</text>
</comment>
<comment type="subunit">
    <molecule>Capsid protein VP2</molecule>
    <text evidence="1">Interacts with capsid protein VP1 and capsid protein VP3 in the mature capsid.</text>
</comment>
<comment type="subunit">
    <molecule>Capsid protein VP3</molecule>
    <text evidence="1">Interacts with capsid protein VP0 and capsid protein VP1 to form heterotrimeric protomers (By similarity). Five protomers subsequently associate to form pentamers which serve as building blocks for the capsid (By similarity). Interacts with capsid protein VP4 in the mature capsid (By similarity). Interacts with protein 2C; this interaction may be important for virion morphogenesis (By similarity).</text>
</comment>
<comment type="subunit">
    <molecule>Capsid protein VP4</molecule>
    <text evidence="1">Interacts with capsid protein VP1 and capsid protein VP3.</text>
</comment>
<comment type="subunit">
    <molecule>Protease 2A</molecule>
    <text evidence="5">Homodimer.</text>
</comment>
<comment type="subunit">
    <molecule>Protein 2C</molecule>
    <text evidence="1">Homohexamer; forms a hexameric ring structure with 6-fold symmetry characteristic of AAA+ ATPases (By similarity). Interacts (via N-terminus) with host RTN3 (via reticulon domain); this interaction is important for viral replication (By similarity). Interacts with capsid protein VP3; this interaction may be important for virion morphogenesis (By similarity).</text>
</comment>
<comment type="subunit">
    <molecule>Protein 3AB</molecule>
    <text evidence="1">Interacts with protein 3CD.</text>
</comment>
<comment type="subunit">
    <molecule>Protein 3A</molecule>
    <text evidence="1">Homodimer (By similarity). Interacts with host GBF1 (By similarity). Interacts (via GOLD domain) with host ACBD3 (via GOLD domain); this interaction allows the formation of a viral protein 3A/ACBD3 heterotetramer with a 2:2 stoichiometry, which will stimulate the recruitment of host PI4KB in order to synthesize PI4P at the viral RNA replication sites (By similarity).</text>
</comment>
<comment type="subunit">
    <molecule>Viral protein genome-linked</molecule>
    <text evidence="1">Interacts with RNA-directed RNA polymerase.</text>
</comment>
<comment type="subunit">
    <molecule>Protein 3CD</molecule>
    <text evidence="1">Interacts with protein 3AB and with RNA-directed RNA polymerase.</text>
</comment>
<comment type="subunit">
    <molecule>RNA-directed RNA polymerase</molecule>
    <text evidence="1">Interacts with Viral protein genome-linked and with protein 3CD.</text>
</comment>
<comment type="subcellular location">
    <molecule>Capsid protein VP0</molecule>
    <subcellularLocation>
        <location>Virion</location>
    </subcellularLocation>
    <subcellularLocation>
        <location evidence="12">Host cytoplasm</location>
    </subcellularLocation>
</comment>
<comment type="subcellular location">
    <molecule>Capsid protein VP4</molecule>
    <subcellularLocation>
        <location>Virion</location>
    </subcellularLocation>
</comment>
<comment type="subcellular location">
    <molecule>Capsid protein VP2</molecule>
    <subcellularLocation>
        <location evidence="1">Virion</location>
    </subcellularLocation>
    <subcellularLocation>
        <location evidence="12">Host cytoplasm</location>
    </subcellularLocation>
</comment>
<comment type="subcellular location">
    <molecule>Capsid protein VP3</molecule>
    <subcellularLocation>
        <location evidence="1">Virion</location>
    </subcellularLocation>
    <subcellularLocation>
        <location evidence="12">Host cytoplasm</location>
    </subcellularLocation>
</comment>
<comment type="subcellular location">
    <molecule>Capsid protein VP1</molecule>
    <subcellularLocation>
        <location evidence="1">Virion</location>
    </subcellularLocation>
    <subcellularLocation>
        <location evidence="12">Host cytoplasm</location>
    </subcellularLocation>
</comment>
<comment type="subcellular location">
    <molecule>Protein 2B</molecule>
    <subcellularLocation>
        <location evidence="12">Host cytoplasmic vesicle membrane</location>
        <topology evidence="12">Peripheral membrane protein</topology>
        <orientation evidence="12">Cytoplasmic side</orientation>
    </subcellularLocation>
    <text>Probably localizes to the surface of intracellular membrane vesicles that are induced after virus infection as the site for viral RNA replication. These vesicles are derived from the endoplasmic reticulum.</text>
</comment>
<comment type="subcellular location">
    <molecule>Protein 2C</molecule>
    <subcellularLocation>
        <location evidence="12">Host cytoplasmic vesicle membrane</location>
        <topology evidence="12">Peripheral membrane protein</topology>
        <orientation evidence="12">Cytoplasmic side</orientation>
    </subcellularLocation>
    <text>Probably localizes to the surface of intracellular membrane vesicles that are induced after virus infection as the site for viral RNA replication. These vesicles are derived from the endoplasmic reticulum.</text>
</comment>
<comment type="subcellular location">
    <molecule>Protein 3A</molecule>
    <subcellularLocation>
        <location evidence="12">Host cytoplasmic vesicle membrane</location>
        <topology evidence="12">Peripheral membrane protein</topology>
        <orientation evidence="12">Cytoplasmic side</orientation>
    </subcellularLocation>
    <text>Probably localizes to the surface of intracellular membrane vesicles that are induced after virus infection as the site for viral RNA replication. These vesicles are derived from the endoplasmic reticulum.</text>
</comment>
<comment type="subcellular location">
    <molecule>Protein 3AB</molecule>
    <subcellularLocation>
        <location evidence="12">Host cytoplasmic vesicle membrane</location>
        <topology evidence="12">Peripheral membrane protein</topology>
        <orientation evidence="12">Cytoplasmic side</orientation>
    </subcellularLocation>
    <text>Probably localizes to the surface of intracellular membrane vesicles that are induced after virus infection as the site for viral RNA replication. These vesicles are derived from the endoplasmic reticulum.</text>
</comment>
<comment type="subcellular location">
    <molecule>Viral protein genome-linked</molecule>
    <subcellularLocation>
        <location evidence="1">Virion</location>
    </subcellularLocation>
    <subcellularLocation>
        <location evidence="6">Host cytoplasm</location>
    </subcellularLocation>
</comment>
<comment type="subcellular location">
    <molecule>Protease 3C</molecule>
    <subcellularLocation>
        <location>Host cytoplasm</location>
    </subcellularLocation>
</comment>
<comment type="subcellular location">
    <molecule>Protein 3CD</molecule>
    <subcellularLocation>
        <location evidence="1">Host nucleus</location>
    </subcellularLocation>
    <subcellularLocation>
        <location evidence="1">Host cytoplasm</location>
    </subcellularLocation>
    <subcellularLocation>
        <location evidence="12">Host cytoplasmic vesicle membrane</location>
        <topology evidence="12">Peripheral membrane protein</topology>
        <orientation evidence="12">Cytoplasmic side</orientation>
    </subcellularLocation>
    <text>Probably localizes to the surface of intracellular membrane vesicles that are induced after virus infection as the site for viral RNA replication. These vesicles are derived from the endoplasmic reticulum.</text>
</comment>
<comment type="subcellular location">
    <molecule>RNA-directed RNA polymerase</molecule>
    <subcellularLocation>
        <location evidence="12">Host cytoplasmic vesicle membrane</location>
        <topology evidence="12">Peripheral membrane protein</topology>
        <orientation evidence="12">Cytoplasmic side</orientation>
    </subcellularLocation>
    <text>Probably localizes to the surface of intracellular membrane vesicles that are induced after virus infection as the site for viral RNA replication. These vesicles are derived from the endoplasmic reticulum.</text>
</comment>
<comment type="domain">
    <molecule>Protein 2C</molecule>
    <text evidence="1">The N-terminus has membrane-binding (By similarity). The N-terminus also displays RNA-binding properties (By similarity). The N-terminus is involved in oligomerization (By similarity). The central part contains an ATPase domain and a C4-type zinc-finger (By similarity). The C-terminus is involved in RNA-binding (By similarity). The extreme C-terminus contains a region involved in oligomerization (By similarity).</text>
</comment>
<comment type="PTM">
    <molecule>Genome polyprotein</molecule>
    <text evidence="1">Specific enzymatic cleavages in vivo by the viral proteases yield processing intermediates and the mature proteins.</text>
</comment>
<comment type="PTM">
    <molecule>Capsid protein VP0</molecule>
    <text evidence="1">Myristoylation is required for the formation of pentamers during virus assembly. Further assembly of 12 pentamers and a molecule of genomic RNA generates the provirion.</text>
</comment>
<comment type="PTM">
    <molecule>Capsid protein VP0</molecule>
    <text evidence="1">During virion maturation, immature virions are rendered infectious following cleavage of VP0 into VP4 and VP2. This maturation seems to be an autocatalytic event triggered by the presence of RNA in the capsid and it is followed by a conformational change infectious virion.</text>
</comment>
<comment type="PTM">
    <molecule>Capsid protein VP4</molecule>
    <text evidence="1">Myristoylation is required during RNA encapsidation and formation of the mature virus particle.</text>
</comment>
<comment type="PTM">
    <molecule>Viral protein genome-linked</molecule>
    <text evidence="1">VPg is uridylylated by the polymerase into VPg-pUpU. This acts as a nucleotide-peptide primer for the genomic RNA replication.</text>
</comment>
<comment type="similarity">
    <text evidence="12">Belongs to the picornaviruses polyprotein family.</text>
</comment>